<feature type="chain" id="PRO_0000284299" description="Endoribonuclease YbeY">
    <location>
        <begin position="1"/>
        <end position="145"/>
    </location>
</feature>
<feature type="binding site" evidence="1">
    <location>
        <position position="109"/>
    </location>
    <ligand>
        <name>Zn(2+)</name>
        <dbReference type="ChEBI" id="CHEBI:29105"/>
        <note>catalytic</note>
    </ligand>
</feature>
<feature type="binding site" evidence="1">
    <location>
        <position position="113"/>
    </location>
    <ligand>
        <name>Zn(2+)</name>
        <dbReference type="ChEBI" id="CHEBI:29105"/>
        <note>catalytic</note>
    </ligand>
</feature>
<feature type="binding site" evidence="1">
    <location>
        <position position="119"/>
    </location>
    <ligand>
        <name>Zn(2+)</name>
        <dbReference type="ChEBI" id="CHEBI:29105"/>
        <note>catalytic</note>
    </ligand>
</feature>
<organism>
    <name type="scientific">Ruthia magnifica subsp. Calyptogena magnifica</name>
    <dbReference type="NCBI Taxonomy" id="413404"/>
    <lineage>
        <taxon>Bacteria</taxon>
        <taxon>Pseudomonadati</taxon>
        <taxon>Pseudomonadota</taxon>
        <taxon>Gammaproteobacteria</taxon>
        <taxon>Candidatus Pseudothioglobaceae</taxon>
        <taxon>Candidatus Ruthturnera</taxon>
    </lineage>
</organism>
<evidence type="ECO:0000255" key="1">
    <source>
        <dbReference type="HAMAP-Rule" id="MF_00009"/>
    </source>
</evidence>
<name>YBEY_RUTMC</name>
<dbReference type="EC" id="3.1.-.-" evidence="1"/>
<dbReference type="EMBL" id="CP000488">
    <property type="protein sequence ID" value="ABL01916.1"/>
    <property type="molecule type" value="Genomic_DNA"/>
</dbReference>
<dbReference type="RefSeq" id="WP_011737542.1">
    <property type="nucleotide sequence ID" value="NC_008610.1"/>
</dbReference>
<dbReference type="SMR" id="A1AVF9"/>
<dbReference type="STRING" id="413404.Rmag_0121"/>
<dbReference type="KEGG" id="rma:Rmag_0121"/>
<dbReference type="eggNOG" id="COG0319">
    <property type="taxonomic scope" value="Bacteria"/>
</dbReference>
<dbReference type="HOGENOM" id="CLU_106710_0_2_6"/>
<dbReference type="OrthoDB" id="9807740at2"/>
<dbReference type="Proteomes" id="UP000002587">
    <property type="component" value="Chromosome"/>
</dbReference>
<dbReference type="GO" id="GO:0005737">
    <property type="term" value="C:cytoplasm"/>
    <property type="evidence" value="ECO:0007669"/>
    <property type="project" value="UniProtKB-SubCell"/>
</dbReference>
<dbReference type="GO" id="GO:0004222">
    <property type="term" value="F:metalloendopeptidase activity"/>
    <property type="evidence" value="ECO:0007669"/>
    <property type="project" value="InterPro"/>
</dbReference>
<dbReference type="GO" id="GO:0004521">
    <property type="term" value="F:RNA endonuclease activity"/>
    <property type="evidence" value="ECO:0007669"/>
    <property type="project" value="UniProtKB-UniRule"/>
</dbReference>
<dbReference type="GO" id="GO:0008270">
    <property type="term" value="F:zinc ion binding"/>
    <property type="evidence" value="ECO:0007669"/>
    <property type="project" value="UniProtKB-UniRule"/>
</dbReference>
<dbReference type="GO" id="GO:0006364">
    <property type="term" value="P:rRNA processing"/>
    <property type="evidence" value="ECO:0007669"/>
    <property type="project" value="UniProtKB-UniRule"/>
</dbReference>
<dbReference type="Gene3D" id="3.40.390.30">
    <property type="entry name" value="Metalloproteases ('zincins'), catalytic domain"/>
    <property type="match status" value="1"/>
</dbReference>
<dbReference type="HAMAP" id="MF_00009">
    <property type="entry name" value="Endoribonucl_YbeY"/>
    <property type="match status" value="1"/>
</dbReference>
<dbReference type="InterPro" id="IPR023091">
    <property type="entry name" value="MetalPrtase_cat_dom_sf_prd"/>
</dbReference>
<dbReference type="InterPro" id="IPR002036">
    <property type="entry name" value="YbeY"/>
</dbReference>
<dbReference type="InterPro" id="IPR020549">
    <property type="entry name" value="YbeY_CS"/>
</dbReference>
<dbReference type="NCBIfam" id="TIGR00043">
    <property type="entry name" value="rRNA maturation RNase YbeY"/>
    <property type="match status" value="1"/>
</dbReference>
<dbReference type="PANTHER" id="PTHR46986">
    <property type="entry name" value="ENDORIBONUCLEASE YBEY, CHLOROPLASTIC"/>
    <property type="match status" value="1"/>
</dbReference>
<dbReference type="PANTHER" id="PTHR46986:SF1">
    <property type="entry name" value="ENDORIBONUCLEASE YBEY, CHLOROPLASTIC"/>
    <property type="match status" value="1"/>
</dbReference>
<dbReference type="Pfam" id="PF02130">
    <property type="entry name" value="YbeY"/>
    <property type="match status" value="1"/>
</dbReference>
<dbReference type="SUPFAM" id="SSF55486">
    <property type="entry name" value="Metalloproteases ('zincins'), catalytic domain"/>
    <property type="match status" value="1"/>
</dbReference>
<dbReference type="PROSITE" id="PS01306">
    <property type="entry name" value="UPF0054"/>
    <property type="match status" value="1"/>
</dbReference>
<sequence>MVVIQNIIHDSSINEYDLSNTLQEVIKELDRGESELLIRLVNETEIKNLNKVYRHQDKLTNVLSFQSDLPIEIDEAVLGDVVICTQVVLKESIEQHKSFNNHLTHMAIHGMLHLLGYDHIDTKDAQQMENLEIKILAKIGINNPY</sequence>
<keyword id="KW-0963">Cytoplasm</keyword>
<keyword id="KW-0255">Endonuclease</keyword>
<keyword id="KW-0378">Hydrolase</keyword>
<keyword id="KW-0479">Metal-binding</keyword>
<keyword id="KW-0540">Nuclease</keyword>
<keyword id="KW-0690">Ribosome biogenesis</keyword>
<keyword id="KW-0698">rRNA processing</keyword>
<keyword id="KW-0862">Zinc</keyword>
<reference key="1">
    <citation type="journal article" date="2007" name="Science">
        <title>The Calyptogena magnifica chemoautotrophic symbiont genome.</title>
        <authorList>
            <person name="Newton I.L.G."/>
            <person name="Woyke T."/>
            <person name="Auchtung T.A."/>
            <person name="Dilly G.F."/>
            <person name="Dutton R.J."/>
            <person name="Fisher M.C."/>
            <person name="Fontanez K.M."/>
            <person name="Lau E."/>
            <person name="Stewart F.J."/>
            <person name="Richardson P.M."/>
            <person name="Barry K.W."/>
            <person name="Saunders E."/>
            <person name="Detter J.C."/>
            <person name="Wu D."/>
            <person name="Eisen J.A."/>
            <person name="Cavanaugh C.M."/>
        </authorList>
    </citation>
    <scope>NUCLEOTIDE SEQUENCE [LARGE SCALE GENOMIC DNA]</scope>
</reference>
<protein>
    <recommendedName>
        <fullName evidence="1">Endoribonuclease YbeY</fullName>
        <ecNumber evidence="1">3.1.-.-</ecNumber>
    </recommendedName>
</protein>
<comment type="function">
    <text evidence="1">Single strand-specific metallo-endoribonuclease involved in late-stage 70S ribosome quality control and in maturation of the 3' terminus of the 16S rRNA.</text>
</comment>
<comment type="cofactor">
    <cofactor evidence="1">
        <name>Zn(2+)</name>
        <dbReference type="ChEBI" id="CHEBI:29105"/>
    </cofactor>
    <text evidence="1">Binds 1 zinc ion.</text>
</comment>
<comment type="subcellular location">
    <subcellularLocation>
        <location evidence="1">Cytoplasm</location>
    </subcellularLocation>
</comment>
<comment type="similarity">
    <text evidence="1">Belongs to the endoribonuclease YbeY family.</text>
</comment>
<accession>A1AVF9</accession>
<proteinExistence type="inferred from homology"/>
<gene>
    <name evidence="1" type="primary">ybeY</name>
    <name type="ordered locus">Rmag_0121</name>
</gene>